<reference key="1">
    <citation type="journal article" date="2005" name="Proc. Natl. Acad. Sci. U.S.A.">
        <title>The complete genome sequence of Mycobacterium avium subspecies paratuberculosis.</title>
        <authorList>
            <person name="Li L."/>
            <person name="Bannantine J.P."/>
            <person name="Zhang Q."/>
            <person name="Amonsin A."/>
            <person name="May B.J."/>
            <person name="Alt D."/>
            <person name="Banerji N."/>
            <person name="Kanjilal S."/>
            <person name="Kapur V."/>
        </authorList>
    </citation>
    <scope>NUCLEOTIDE SEQUENCE [LARGE SCALE GENOMIC DNA]</scope>
    <source>
        <strain>ATCC BAA-968 / K-10</strain>
    </source>
</reference>
<feature type="chain" id="PRO_0000145762" description="Phosphoenolpyruvate transferase">
    <location>
        <begin position="1"/>
        <end position="337"/>
    </location>
</feature>
<feature type="binding site" evidence="1">
    <location>
        <position position="69"/>
    </location>
    <ligand>
        <name>7,8-didemethyl-8-hydroxy-5-deazariboflavin</name>
        <dbReference type="ChEBI" id="CHEBI:59904"/>
    </ligand>
</feature>
<proteinExistence type="inferred from homology"/>
<evidence type="ECO:0000255" key="1">
    <source>
        <dbReference type="HAMAP-Rule" id="MF_01257"/>
    </source>
</evidence>
<evidence type="ECO:0000305" key="2"/>
<gene>
    <name evidence="1" type="primary">fbiA</name>
    <name type="ordered locus">MAP_3374</name>
</gene>
<sequence length="337" mass="35815">MKVTVLVGGVGGARFLLGVQQLFGLGQFRAQRHTHGRPDTAAGSHELTAIVNIGDDAWIHGLRVCPDLDTCMYTLGGGVDPERGWGHRDETWHAKEELARYGVQPDWFGLGDRDIGTHLVRTQMLNAGYPLTQITAALCDRWQPGARLLPVSDDRCETHVVITDPDDGSRRAIHFQEWWVRYRAQVPTHSFAFVGAEKAAATTETIAAIADADVILIAPSNPVVSVGAILAVPGVRGALRAAGAPIVGYSPIIGGKPLRGMADACLSVIGVESTAEAVGRHYGARRGTGILDCWLVSQDDHADIEGVAVRAVPLMMTDPAATAEMVSAGLQLAGVTP</sequence>
<accession>Q73UJ4</accession>
<name>FBIA_MYCPA</name>
<keyword id="KW-0460">Magnesium</keyword>
<keyword id="KW-1185">Reference proteome</keyword>
<keyword id="KW-0808">Transferase</keyword>
<dbReference type="EC" id="2.7.8.28" evidence="1"/>
<dbReference type="EMBL" id="AE016958">
    <property type="protein sequence ID" value="AAS05924.1"/>
    <property type="status" value="ALT_INIT"/>
    <property type="molecule type" value="Genomic_DNA"/>
</dbReference>
<dbReference type="SMR" id="Q73UJ4"/>
<dbReference type="STRING" id="262316.MAP_3374"/>
<dbReference type="KEGG" id="mpa:MAP_3374"/>
<dbReference type="eggNOG" id="COG0391">
    <property type="taxonomic scope" value="Bacteria"/>
</dbReference>
<dbReference type="HOGENOM" id="CLU_055795_0_0_11"/>
<dbReference type="UniPathway" id="UPA00071"/>
<dbReference type="Proteomes" id="UP000000580">
    <property type="component" value="Chromosome"/>
</dbReference>
<dbReference type="GO" id="GO:0043743">
    <property type="term" value="F:LPPG:FO 2-phospho-L-lactate transferase activity"/>
    <property type="evidence" value="ECO:0007669"/>
    <property type="project" value="UniProtKB-EC"/>
</dbReference>
<dbReference type="GO" id="GO:0000287">
    <property type="term" value="F:magnesium ion binding"/>
    <property type="evidence" value="ECO:0007669"/>
    <property type="project" value="InterPro"/>
</dbReference>
<dbReference type="GO" id="GO:0052645">
    <property type="term" value="P:F420-0 metabolic process"/>
    <property type="evidence" value="ECO:0007669"/>
    <property type="project" value="UniProtKB-UniRule"/>
</dbReference>
<dbReference type="CDD" id="cd07186">
    <property type="entry name" value="CofD_like"/>
    <property type="match status" value="1"/>
</dbReference>
<dbReference type="FunFam" id="1.10.8.240:FF:000001">
    <property type="entry name" value="2-phospho-L-lactate transferase"/>
    <property type="match status" value="1"/>
</dbReference>
<dbReference type="Gene3D" id="1.10.8.240">
    <property type="entry name" value="CofD-like domain"/>
    <property type="match status" value="1"/>
</dbReference>
<dbReference type="Gene3D" id="3.40.50.10680">
    <property type="entry name" value="CofD-like domains"/>
    <property type="match status" value="1"/>
</dbReference>
<dbReference type="HAMAP" id="MF_01257">
    <property type="entry name" value="CofD"/>
    <property type="match status" value="1"/>
</dbReference>
<dbReference type="InterPro" id="IPR002882">
    <property type="entry name" value="CofD"/>
</dbReference>
<dbReference type="InterPro" id="IPR038136">
    <property type="entry name" value="CofD-like_dom_sf"/>
</dbReference>
<dbReference type="InterPro" id="IPR010115">
    <property type="entry name" value="FbiA/CofD"/>
</dbReference>
<dbReference type="NCBIfam" id="TIGR01819">
    <property type="entry name" value="F420_cofD"/>
    <property type="match status" value="1"/>
</dbReference>
<dbReference type="PANTHER" id="PTHR43007">
    <property type="entry name" value="2-PHOSPHO-L-LACTATE TRANSFERASE"/>
    <property type="match status" value="1"/>
</dbReference>
<dbReference type="PANTHER" id="PTHR43007:SF1">
    <property type="entry name" value="2-PHOSPHO-L-LACTATE TRANSFERASE"/>
    <property type="match status" value="1"/>
</dbReference>
<dbReference type="Pfam" id="PF01933">
    <property type="entry name" value="CofD"/>
    <property type="match status" value="1"/>
</dbReference>
<dbReference type="SUPFAM" id="SSF142338">
    <property type="entry name" value="CofD-like"/>
    <property type="match status" value="1"/>
</dbReference>
<comment type="function">
    <text evidence="1">Catalyzes the transfer of the phosphoenolpyruvate moiety from enoylpyruvoyl-2-diphospho-5'-guanosine (EPPG) to 7,8-didemethyl-8-hydroxy-5-deazariboflavin (FO) with the formation of dehydro coenzyme F420-0 and GMP.</text>
</comment>
<comment type="catalytic activity">
    <reaction evidence="1">
        <text>enolpyruvoyl-2-diphospho-5'-guanosine + 7,8-didemethyl-8-hydroxy-5-deazariboflavin = dehydro coenzyme F420-0 + GMP + H(+)</text>
        <dbReference type="Rhea" id="RHEA:27510"/>
        <dbReference type="ChEBI" id="CHEBI:15378"/>
        <dbReference type="ChEBI" id="CHEBI:58115"/>
        <dbReference type="ChEBI" id="CHEBI:59904"/>
        <dbReference type="ChEBI" id="CHEBI:143701"/>
        <dbReference type="ChEBI" id="CHEBI:143705"/>
        <dbReference type="EC" id="2.7.8.28"/>
    </reaction>
</comment>
<comment type="cofactor">
    <cofactor evidence="1">
        <name>Mg(2+)</name>
        <dbReference type="ChEBI" id="CHEBI:18420"/>
    </cofactor>
</comment>
<comment type="pathway">
    <text evidence="1">Cofactor biosynthesis; coenzyme F420 biosynthesis.</text>
</comment>
<comment type="subunit">
    <text evidence="1">Homodimer.</text>
</comment>
<comment type="similarity">
    <text evidence="1">Belongs to the CofD family.</text>
</comment>
<comment type="sequence caution" evidence="2">
    <conflict type="erroneous initiation">
        <sequence resource="EMBL-CDS" id="AAS05924"/>
    </conflict>
</comment>
<organism>
    <name type="scientific">Mycolicibacterium paratuberculosis (strain ATCC BAA-968 / K-10)</name>
    <name type="common">Mycobacterium paratuberculosis</name>
    <dbReference type="NCBI Taxonomy" id="262316"/>
    <lineage>
        <taxon>Bacteria</taxon>
        <taxon>Bacillati</taxon>
        <taxon>Actinomycetota</taxon>
        <taxon>Actinomycetes</taxon>
        <taxon>Mycobacteriales</taxon>
        <taxon>Mycobacteriaceae</taxon>
        <taxon>Mycobacterium</taxon>
        <taxon>Mycobacterium avium complex (MAC)</taxon>
    </lineage>
</organism>
<protein>
    <recommendedName>
        <fullName evidence="1">Phosphoenolpyruvate transferase</fullName>
        <ecNumber evidence="1">2.7.8.28</ecNumber>
    </recommendedName>
    <alternativeName>
        <fullName evidence="1">EPPG:FO PEP transferase</fullName>
    </alternativeName>
</protein>